<sequence>MTVDLLLGLQWGDEGKGKIVDVLTSNYDIIARFQGGPNAGHTLEFDGIKHVLRTIPSGIFHKDSVNIIGNGVVIDPVVFQKEIEGLEKFNLDIKKKLIISRKAHLILPTHRLLDAASEASKGKAKIGSTLKGIGPTYMDKTGRNGLRVGDIELEDFKERYRSLADKHEAMIAFYDVNIQYNLAELEKEFFEAIEELKKLDFIDSEEYMHQAQKAGKSILCEGAQGSLLDVDFGTYPFVTSSNTTAAGACTGLGIAPNKIKEVYGIFKAYVTRVGSGPFPTELFDEVGATMARVGNEFGSVTGRQRRCGWLDLVALKYAVQVNGVTQLMMMKGDVLSGFETLKVCTEYNYKGQNISHFPYNIEPENVTPVYKEFKGWKQDLTGLTTYDQLPVELKEYIEFIEKEIEVPIKIVSVGPDRKQTITK</sequence>
<dbReference type="EC" id="6.3.4.4" evidence="1"/>
<dbReference type="EMBL" id="CP000685">
    <property type="protein sequence ID" value="ABQ05249.1"/>
    <property type="molecule type" value="Genomic_DNA"/>
</dbReference>
<dbReference type="RefSeq" id="WP_012024288.1">
    <property type="nucleotide sequence ID" value="NC_009441.1"/>
</dbReference>
<dbReference type="SMR" id="A5FHR3"/>
<dbReference type="STRING" id="376686.Fjoh_2221"/>
<dbReference type="KEGG" id="fjo:Fjoh_2221"/>
<dbReference type="eggNOG" id="COG0104">
    <property type="taxonomic scope" value="Bacteria"/>
</dbReference>
<dbReference type="HOGENOM" id="CLU_029848_0_0_10"/>
<dbReference type="OrthoDB" id="9807553at2"/>
<dbReference type="UniPathway" id="UPA00075">
    <property type="reaction ID" value="UER00335"/>
</dbReference>
<dbReference type="Proteomes" id="UP000006694">
    <property type="component" value="Chromosome"/>
</dbReference>
<dbReference type="GO" id="GO:0005737">
    <property type="term" value="C:cytoplasm"/>
    <property type="evidence" value="ECO:0007669"/>
    <property type="project" value="UniProtKB-SubCell"/>
</dbReference>
<dbReference type="GO" id="GO:0004019">
    <property type="term" value="F:adenylosuccinate synthase activity"/>
    <property type="evidence" value="ECO:0007669"/>
    <property type="project" value="UniProtKB-UniRule"/>
</dbReference>
<dbReference type="GO" id="GO:0005525">
    <property type="term" value="F:GTP binding"/>
    <property type="evidence" value="ECO:0007669"/>
    <property type="project" value="UniProtKB-UniRule"/>
</dbReference>
<dbReference type="GO" id="GO:0000287">
    <property type="term" value="F:magnesium ion binding"/>
    <property type="evidence" value="ECO:0007669"/>
    <property type="project" value="UniProtKB-UniRule"/>
</dbReference>
<dbReference type="GO" id="GO:0044208">
    <property type="term" value="P:'de novo' AMP biosynthetic process"/>
    <property type="evidence" value="ECO:0007669"/>
    <property type="project" value="UniProtKB-UniRule"/>
</dbReference>
<dbReference type="GO" id="GO:0046040">
    <property type="term" value="P:IMP metabolic process"/>
    <property type="evidence" value="ECO:0007669"/>
    <property type="project" value="TreeGrafter"/>
</dbReference>
<dbReference type="CDD" id="cd03108">
    <property type="entry name" value="AdSS"/>
    <property type="match status" value="1"/>
</dbReference>
<dbReference type="FunFam" id="1.10.300.10:FF:000001">
    <property type="entry name" value="Adenylosuccinate synthetase"/>
    <property type="match status" value="1"/>
</dbReference>
<dbReference type="FunFam" id="3.90.170.10:FF:000001">
    <property type="entry name" value="Adenylosuccinate synthetase"/>
    <property type="match status" value="1"/>
</dbReference>
<dbReference type="Gene3D" id="3.40.440.10">
    <property type="entry name" value="Adenylosuccinate Synthetase, subunit A, domain 1"/>
    <property type="match status" value="1"/>
</dbReference>
<dbReference type="Gene3D" id="1.10.300.10">
    <property type="entry name" value="Adenylosuccinate Synthetase, subunit A, domain 2"/>
    <property type="match status" value="1"/>
</dbReference>
<dbReference type="Gene3D" id="3.90.170.10">
    <property type="entry name" value="Adenylosuccinate Synthetase, subunit A, domain 3"/>
    <property type="match status" value="1"/>
</dbReference>
<dbReference type="HAMAP" id="MF_00011">
    <property type="entry name" value="Adenylosucc_synth"/>
    <property type="match status" value="1"/>
</dbReference>
<dbReference type="InterPro" id="IPR018220">
    <property type="entry name" value="Adenylosuccin_syn_GTP-bd"/>
</dbReference>
<dbReference type="InterPro" id="IPR033128">
    <property type="entry name" value="Adenylosuccin_syn_Lys_AS"/>
</dbReference>
<dbReference type="InterPro" id="IPR042109">
    <property type="entry name" value="Adenylosuccinate_synth_dom1"/>
</dbReference>
<dbReference type="InterPro" id="IPR042110">
    <property type="entry name" value="Adenylosuccinate_synth_dom2"/>
</dbReference>
<dbReference type="InterPro" id="IPR042111">
    <property type="entry name" value="Adenylosuccinate_synth_dom3"/>
</dbReference>
<dbReference type="InterPro" id="IPR001114">
    <property type="entry name" value="Adenylosuccinate_synthetase"/>
</dbReference>
<dbReference type="InterPro" id="IPR027417">
    <property type="entry name" value="P-loop_NTPase"/>
</dbReference>
<dbReference type="NCBIfam" id="NF002223">
    <property type="entry name" value="PRK01117.1"/>
    <property type="match status" value="1"/>
</dbReference>
<dbReference type="NCBIfam" id="TIGR00184">
    <property type="entry name" value="purA"/>
    <property type="match status" value="1"/>
</dbReference>
<dbReference type="PANTHER" id="PTHR11846">
    <property type="entry name" value="ADENYLOSUCCINATE SYNTHETASE"/>
    <property type="match status" value="1"/>
</dbReference>
<dbReference type="PANTHER" id="PTHR11846:SF0">
    <property type="entry name" value="ADENYLOSUCCINATE SYNTHETASE"/>
    <property type="match status" value="1"/>
</dbReference>
<dbReference type="Pfam" id="PF00709">
    <property type="entry name" value="Adenylsucc_synt"/>
    <property type="match status" value="1"/>
</dbReference>
<dbReference type="SMART" id="SM00788">
    <property type="entry name" value="Adenylsucc_synt"/>
    <property type="match status" value="1"/>
</dbReference>
<dbReference type="SUPFAM" id="SSF52540">
    <property type="entry name" value="P-loop containing nucleoside triphosphate hydrolases"/>
    <property type="match status" value="1"/>
</dbReference>
<dbReference type="PROSITE" id="PS01266">
    <property type="entry name" value="ADENYLOSUCCIN_SYN_1"/>
    <property type="match status" value="1"/>
</dbReference>
<dbReference type="PROSITE" id="PS00513">
    <property type="entry name" value="ADENYLOSUCCIN_SYN_2"/>
    <property type="match status" value="1"/>
</dbReference>
<evidence type="ECO:0000255" key="1">
    <source>
        <dbReference type="HAMAP-Rule" id="MF_00011"/>
    </source>
</evidence>
<protein>
    <recommendedName>
        <fullName evidence="1">Adenylosuccinate synthetase</fullName>
        <shortName evidence="1">AMPSase</shortName>
        <shortName evidence="1">AdSS</shortName>
        <ecNumber evidence="1">6.3.4.4</ecNumber>
    </recommendedName>
    <alternativeName>
        <fullName evidence="1">IMP--aspartate ligase</fullName>
    </alternativeName>
</protein>
<accession>A5FHR3</accession>
<keyword id="KW-0963">Cytoplasm</keyword>
<keyword id="KW-0342">GTP-binding</keyword>
<keyword id="KW-0436">Ligase</keyword>
<keyword id="KW-0460">Magnesium</keyword>
<keyword id="KW-0479">Metal-binding</keyword>
<keyword id="KW-0547">Nucleotide-binding</keyword>
<keyword id="KW-0658">Purine biosynthesis</keyword>
<comment type="function">
    <text evidence="1">Plays an important role in the de novo pathway of purine nucleotide biosynthesis. Catalyzes the first committed step in the biosynthesis of AMP from IMP.</text>
</comment>
<comment type="catalytic activity">
    <reaction evidence="1">
        <text>IMP + L-aspartate + GTP = N(6)-(1,2-dicarboxyethyl)-AMP + GDP + phosphate + 2 H(+)</text>
        <dbReference type="Rhea" id="RHEA:15753"/>
        <dbReference type="ChEBI" id="CHEBI:15378"/>
        <dbReference type="ChEBI" id="CHEBI:29991"/>
        <dbReference type="ChEBI" id="CHEBI:37565"/>
        <dbReference type="ChEBI" id="CHEBI:43474"/>
        <dbReference type="ChEBI" id="CHEBI:57567"/>
        <dbReference type="ChEBI" id="CHEBI:58053"/>
        <dbReference type="ChEBI" id="CHEBI:58189"/>
        <dbReference type="EC" id="6.3.4.4"/>
    </reaction>
</comment>
<comment type="cofactor">
    <cofactor evidence="1">
        <name>Mg(2+)</name>
        <dbReference type="ChEBI" id="CHEBI:18420"/>
    </cofactor>
    <text evidence="1">Binds 1 Mg(2+) ion per subunit.</text>
</comment>
<comment type="pathway">
    <text evidence="1">Purine metabolism; AMP biosynthesis via de novo pathway; AMP from IMP: step 1/2.</text>
</comment>
<comment type="subunit">
    <text evidence="1">Homodimer.</text>
</comment>
<comment type="subcellular location">
    <subcellularLocation>
        <location evidence="1">Cytoplasm</location>
    </subcellularLocation>
</comment>
<comment type="similarity">
    <text evidence="1">Belongs to the adenylosuccinate synthetase family.</text>
</comment>
<proteinExistence type="inferred from homology"/>
<name>PURA_FLAJ1</name>
<organism>
    <name type="scientific">Flavobacterium johnsoniae (strain ATCC 17061 / DSM 2064 / JCM 8514 / BCRC 14874 / CCUG 350202 / NBRC 14942 / NCIMB 11054 / UW101)</name>
    <name type="common">Cytophaga johnsonae</name>
    <dbReference type="NCBI Taxonomy" id="376686"/>
    <lineage>
        <taxon>Bacteria</taxon>
        <taxon>Pseudomonadati</taxon>
        <taxon>Bacteroidota</taxon>
        <taxon>Flavobacteriia</taxon>
        <taxon>Flavobacteriales</taxon>
        <taxon>Flavobacteriaceae</taxon>
        <taxon>Flavobacterium</taxon>
    </lineage>
</organism>
<feature type="chain" id="PRO_1000073945" description="Adenylosuccinate synthetase">
    <location>
        <begin position="1"/>
        <end position="423"/>
    </location>
</feature>
<feature type="active site" description="Proton acceptor" evidence="1">
    <location>
        <position position="13"/>
    </location>
</feature>
<feature type="active site" description="Proton donor" evidence="1">
    <location>
        <position position="41"/>
    </location>
</feature>
<feature type="binding site" evidence="1">
    <location>
        <begin position="12"/>
        <end position="18"/>
    </location>
    <ligand>
        <name>GTP</name>
        <dbReference type="ChEBI" id="CHEBI:37565"/>
    </ligand>
</feature>
<feature type="binding site" description="in other chain" evidence="1">
    <location>
        <begin position="13"/>
        <end position="16"/>
    </location>
    <ligand>
        <name>IMP</name>
        <dbReference type="ChEBI" id="CHEBI:58053"/>
        <note>ligand shared between dimeric partners</note>
    </ligand>
</feature>
<feature type="binding site" evidence="1">
    <location>
        <position position="13"/>
    </location>
    <ligand>
        <name>Mg(2+)</name>
        <dbReference type="ChEBI" id="CHEBI:18420"/>
    </ligand>
</feature>
<feature type="binding site" description="in other chain" evidence="1">
    <location>
        <begin position="38"/>
        <end position="41"/>
    </location>
    <ligand>
        <name>IMP</name>
        <dbReference type="ChEBI" id="CHEBI:58053"/>
        <note>ligand shared between dimeric partners</note>
    </ligand>
</feature>
<feature type="binding site" evidence="1">
    <location>
        <begin position="40"/>
        <end position="42"/>
    </location>
    <ligand>
        <name>GTP</name>
        <dbReference type="ChEBI" id="CHEBI:37565"/>
    </ligand>
</feature>
<feature type="binding site" evidence="1">
    <location>
        <position position="40"/>
    </location>
    <ligand>
        <name>Mg(2+)</name>
        <dbReference type="ChEBI" id="CHEBI:18420"/>
    </ligand>
</feature>
<feature type="binding site" description="in other chain" evidence="1">
    <location>
        <position position="129"/>
    </location>
    <ligand>
        <name>IMP</name>
        <dbReference type="ChEBI" id="CHEBI:58053"/>
        <note>ligand shared between dimeric partners</note>
    </ligand>
</feature>
<feature type="binding site" evidence="1">
    <location>
        <position position="143"/>
    </location>
    <ligand>
        <name>IMP</name>
        <dbReference type="ChEBI" id="CHEBI:58053"/>
        <note>ligand shared between dimeric partners</note>
    </ligand>
</feature>
<feature type="binding site" description="in other chain" evidence="1">
    <location>
        <position position="224"/>
    </location>
    <ligand>
        <name>IMP</name>
        <dbReference type="ChEBI" id="CHEBI:58053"/>
        <note>ligand shared between dimeric partners</note>
    </ligand>
</feature>
<feature type="binding site" description="in other chain" evidence="1">
    <location>
        <position position="239"/>
    </location>
    <ligand>
        <name>IMP</name>
        <dbReference type="ChEBI" id="CHEBI:58053"/>
        <note>ligand shared between dimeric partners</note>
    </ligand>
</feature>
<feature type="binding site" evidence="1">
    <location>
        <begin position="299"/>
        <end position="305"/>
    </location>
    <ligand>
        <name>substrate</name>
    </ligand>
</feature>
<feature type="binding site" description="in other chain" evidence="1">
    <location>
        <position position="303"/>
    </location>
    <ligand>
        <name>IMP</name>
        <dbReference type="ChEBI" id="CHEBI:58053"/>
        <note>ligand shared between dimeric partners</note>
    </ligand>
</feature>
<feature type="binding site" evidence="1">
    <location>
        <position position="305"/>
    </location>
    <ligand>
        <name>GTP</name>
        <dbReference type="ChEBI" id="CHEBI:37565"/>
    </ligand>
</feature>
<feature type="binding site" evidence="1">
    <location>
        <begin position="331"/>
        <end position="333"/>
    </location>
    <ligand>
        <name>GTP</name>
        <dbReference type="ChEBI" id="CHEBI:37565"/>
    </ligand>
</feature>
<feature type="binding site" evidence="1">
    <location>
        <begin position="412"/>
        <end position="414"/>
    </location>
    <ligand>
        <name>GTP</name>
        <dbReference type="ChEBI" id="CHEBI:37565"/>
    </ligand>
</feature>
<reference key="1">
    <citation type="journal article" date="2009" name="Appl. Environ. Microbiol.">
        <title>Novel features of the polysaccharide-digesting gliding bacterium Flavobacterium johnsoniae as revealed by genome sequence analysis.</title>
        <authorList>
            <person name="McBride M.J."/>
            <person name="Xie G."/>
            <person name="Martens E.C."/>
            <person name="Lapidus A."/>
            <person name="Henrissat B."/>
            <person name="Rhodes R.G."/>
            <person name="Goltsman E."/>
            <person name="Wang W."/>
            <person name="Xu J."/>
            <person name="Hunnicutt D.W."/>
            <person name="Staroscik A.M."/>
            <person name="Hoover T.R."/>
            <person name="Cheng Y.Q."/>
            <person name="Stein J.L."/>
        </authorList>
    </citation>
    <scope>NUCLEOTIDE SEQUENCE [LARGE SCALE GENOMIC DNA]</scope>
    <source>
        <strain>ATCC 17061 / DSM 2064 / JCM 8514 / BCRC 14874 / CCUG 350202 / NBRC 14942 / NCIMB 11054 / UW101</strain>
    </source>
</reference>
<gene>
    <name evidence="1" type="primary">purA</name>
    <name type="ordered locus">Fjoh_2221</name>
</gene>